<proteinExistence type="inferred from homology"/>
<sequence>MTTPSDLNIYQLIDTQNGRVTPRIYTDPDIYQLELERIFGRCWLFLAHESQIPKPGDFFNTYMGEDAVVVVRQKDGSIKAFLNQCRHRAMRVSYADCGNTRAFTCPYHGWSYGINGELIDVPLEPRAYPQGLCKSHWGLNEVPCVESYKGLIFGNWDTSAPGLHDYLGDIAWYLDGMLDRREGGTEIVGGVQKWVINCNWKFPAEQFASDQYHALFSHASAVQVLGAKDDGSDKRLGDGQTARPVWETAKDALQFGQDGHGSGFFFTEKPDANVWVDGAVSSYYRETYAEAEQRLGEVRALRLAGHNNIFPTLSWLNGTATLRVWHPRGPDQVEVWTFCITDKAASDEVKAAFENSATRAFGPAGFLEQDDSENWCEIQKLLKGHRARNSKLCLEMGLGQEKRRDDGIPGITNYIFSETAARGMYQRWADLLSSESWQEVLDKTAAYQQEVMK</sequence>
<organism>
    <name type="scientific">Shigella flexneri serotype 5b (strain 8401)</name>
    <dbReference type="NCBI Taxonomy" id="373384"/>
    <lineage>
        <taxon>Bacteria</taxon>
        <taxon>Pseudomonadati</taxon>
        <taxon>Pseudomonadota</taxon>
        <taxon>Gammaproteobacteria</taxon>
        <taxon>Enterobacterales</taxon>
        <taxon>Enterobacteriaceae</taxon>
        <taxon>Shigella</taxon>
    </lineage>
</organism>
<name>HCAE_SHIF8</name>
<accession>Q0T1Y1</accession>
<dbReference type="EC" id="1.14.12.19" evidence="1"/>
<dbReference type="EMBL" id="CP000266">
    <property type="protein sequence ID" value="ABF04684.1"/>
    <property type="molecule type" value="Genomic_DNA"/>
</dbReference>
<dbReference type="RefSeq" id="WP_000211166.1">
    <property type="nucleotide sequence ID" value="NC_008258.1"/>
</dbReference>
<dbReference type="SMR" id="Q0T1Y1"/>
<dbReference type="KEGG" id="sfv:SFV_2586"/>
<dbReference type="HOGENOM" id="CLU_026244_4_0_6"/>
<dbReference type="UniPathway" id="UPA00714"/>
<dbReference type="Proteomes" id="UP000000659">
    <property type="component" value="Chromosome"/>
</dbReference>
<dbReference type="GO" id="GO:0051537">
    <property type="term" value="F:2 iron, 2 sulfur cluster binding"/>
    <property type="evidence" value="ECO:0007669"/>
    <property type="project" value="UniProtKB-KW"/>
</dbReference>
<dbReference type="GO" id="GO:0008695">
    <property type="term" value="F:3-phenylpropionate dioxygenase activity"/>
    <property type="evidence" value="ECO:0007669"/>
    <property type="project" value="UniProtKB-UniRule"/>
</dbReference>
<dbReference type="GO" id="GO:0005506">
    <property type="term" value="F:iron ion binding"/>
    <property type="evidence" value="ECO:0007669"/>
    <property type="project" value="UniProtKB-UniRule"/>
</dbReference>
<dbReference type="GO" id="GO:0019380">
    <property type="term" value="P:3-phenylpropionate catabolic process"/>
    <property type="evidence" value="ECO:0007669"/>
    <property type="project" value="UniProtKB-UniRule"/>
</dbReference>
<dbReference type="CDD" id="cd08881">
    <property type="entry name" value="RHO_alpha_C_NDO-like"/>
    <property type="match status" value="1"/>
</dbReference>
<dbReference type="FunFam" id="2.102.10.10:FF:000004">
    <property type="entry name" value="3-phenylpropionate/cinnamic acid dioxygenase subunit alpha"/>
    <property type="match status" value="1"/>
</dbReference>
<dbReference type="Gene3D" id="3.90.380.10">
    <property type="entry name" value="Naphthalene 1,2-dioxygenase Alpha Subunit, Chain A, domain 1"/>
    <property type="match status" value="1"/>
</dbReference>
<dbReference type="Gene3D" id="2.102.10.10">
    <property type="entry name" value="Rieske [2Fe-2S] iron-sulphur domain"/>
    <property type="match status" value="1"/>
</dbReference>
<dbReference type="HAMAP" id="MF_01648">
    <property type="entry name" value="HcaE"/>
    <property type="match status" value="1"/>
</dbReference>
<dbReference type="InterPro" id="IPR054883">
    <property type="entry name" value="3PPDioc_HcaE"/>
</dbReference>
<dbReference type="InterPro" id="IPR020875">
    <property type="entry name" value="HcaE"/>
</dbReference>
<dbReference type="InterPro" id="IPR043266">
    <property type="entry name" value="RHO_NdoB-like_C"/>
</dbReference>
<dbReference type="InterPro" id="IPR017941">
    <property type="entry name" value="Rieske_2Fe-2S"/>
</dbReference>
<dbReference type="InterPro" id="IPR036922">
    <property type="entry name" value="Rieske_2Fe-2S_sf"/>
</dbReference>
<dbReference type="InterPro" id="IPR015881">
    <property type="entry name" value="Ring-hydroxy_dOase_2Fe2S_BS"/>
</dbReference>
<dbReference type="InterPro" id="IPR015879">
    <property type="entry name" value="Ring_hydroxy_dOase_asu_C_dom"/>
</dbReference>
<dbReference type="InterPro" id="IPR001663">
    <property type="entry name" value="Rng_hydr_dOase-A"/>
</dbReference>
<dbReference type="NCBIfam" id="NF042946">
    <property type="entry name" value="3PPDioc_HcaE"/>
    <property type="match status" value="1"/>
</dbReference>
<dbReference type="PANTHER" id="PTHR43756:SF1">
    <property type="entry name" value="3-PHENYLPROPIONATE_CINNAMIC ACID DIOXYGENASE SUBUNIT ALPHA"/>
    <property type="match status" value="1"/>
</dbReference>
<dbReference type="PANTHER" id="PTHR43756">
    <property type="entry name" value="CHOLINE MONOOXYGENASE, CHLOROPLASTIC"/>
    <property type="match status" value="1"/>
</dbReference>
<dbReference type="Pfam" id="PF00355">
    <property type="entry name" value="Rieske"/>
    <property type="match status" value="1"/>
</dbReference>
<dbReference type="Pfam" id="PF00848">
    <property type="entry name" value="Ring_hydroxyl_A"/>
    <property type="match status" value="1"/>
</dbReference>
<dbReference type="PRINTS" id="PR00090">
    <property type="entry name" value="RNGDIOXGNASE"/>
</dbReference>
<dbReference type="SUPFAM" id="SSF55961">
    <property type="entry name" value="Bet v1-like"/>
    <property type="match status" value="1"/>
</dbReference>
<dbReference type="SUPFAM" id="SSF50022">
    <property type="entry name" value="ISP domain"/>
    <property type="match status" value="1"/>
</dbReference>
<dbReference type="PROSITE" id="PS51296">
    <property type="entry name" value="RIESKE"/>
    <property type="match status" value="1"/>
</dbReference>
<dbReference type="PROSITE" id="PS00570">
    <property type="entry name" value="RING_HYDROXYL_ALPHA"/>
    <property type="match status" value="1"/>
</dbReference>
<comment type="function">
    <text evidence="1">Part of the multicomponent 3-phenylpropionate dioxygenase. Converts 3-phenylpropionic acid (PP) and cinnamic acid (CI) into 3-phenylpropionate-dihydrodiol (PP-dihydrodiol) and cinnamic acid-dihydrodiol (CI-dihydrodiol), respectively.</text>
</comment>
<comment type="catalytic activity">
    <reaction evidence="1">
        <text>3-phenylpropanoate + NADH + O2 + H(+) = 3-(cis-5,6-dihydroxycyclohexa-1,3-dien-1-yl)propanoate + NAD(+)</text>
        <dbReference type="Rhea" id="RHEA:20357"/>
        <dbReference type="ChEBI" id="CHEBI:15378"/>
        <dbReference type="ChEBI" id="CHEBI:15379"/>
        <dbReference type="ChEBI" id="CHEBI:51057"/>
        <dbReference type="ChEBI" id="CHEBI:57540"/>
        <dbReference type="ChEBI" id="CHEBI:57945"/>
        <dbReference type="ChEBI" id="CHEBI:60087"/>
        <dbReference type="EC" id="1.14.12.19"/>
    </reaction>
</comment>
<comment type="catalytic activity">
    <reaction evidence="1">
        <text>(E)-cinnamate + NADH + O2 + H(+) = (2E)-3-(cis-5,6-dihydroxycyclohexa-1,3-dien-1-yl)prop-2-enoate + NAD(+)</text>
        <dbReference type="Rhea" id="RHEA:25058"/>
        <dbReference type="ChEBI" id="CHEBI:15378"/>
        <dbReference type="ChEBI" id="CHEBI:15379"/>
        <dbReference type="ChEBI" id="CHEBI:15669"/>
        <dbReference type="ChEBI" id="CHEBI:57540"/>
        <dbReference type="ChEBI" id="CHEBI:57945"/>
        <dbReference type="ChEBI" id="CHEBI:61451"/>
        <dbReference type="EC" id="1.14.12.19"/>
    </reaction>
</comment>
<comment type="cofactor">
    <cofactor evidence="1">
        <name>Fe cation</name>
        <dbReference type="ChEBI" id="CHEBI:24875"/>
    </cofactor>
    <text evidence="1">Binds 1 Fe cation.</text>
</comment>
<comment type="cofactor">
    <cofactor evidence="1">
        <name>[2Fe-2S] cluster</name>
        <dbReference type="ChEBI" id="CHEBI:190135"/>
    </cofactor>
    <text evidence="1">Binds 1 [2Fe-2S] cluster per subunit.</text>
</comment>
<comment type="pathway">
    <text evidence="1">Aromatic compound metabolism; 3-phenylpropanoate degradation.</text>
</comment>
<comment type="subunit">
    <text evidence="1">This dioxygenase system consists of four proteins: the two subunits of the hydroxylase component (HcaE and HcaF), a ferredoxin (HcaC) and a ferredoxin reductase (HcaD).</text>
</comment>
<comment type="similarity">
    <text evidence="1">Belongs to the bacterial ring-hydroxylating dioxygenase alpha subunit family.</text>
</comment>
<keyword id="KW-0001">2Fe-2S</keyword>
<keyword id="KW-0058">Aromatic hydrocarbons catabolism</keyword>
<keyword id="KW-0223">Dioxygenase</keyword>
<keyword id="KW-0408">Iron</keyword>
<keyword id="KW-0411">Iron-sulfur</keyword>
<keyword id="KW-0479">Metal-binding</keyword>
<keyword id="KW-0520">NAD</keyword>
<keyword id="KW-0560">Oxidoreductase</keyword>
<feature type="chain" id="PRO_0000333708" description="3-phenylpropionate/cinnamic acid dioxygenase subunit alpha">
    <location>
        <begin position="1"/>
        <end position="453"/>
    </location>
</feature>
<feature type="domain" description="Rieske" evidence="1">
    <location>
        <begin position="44"/>
        <end position="142"/>
    </location>
</feature>
<feature type="binding site" evidence="1">
    <location>
        <position position="85"/>
    </location>
    <ligand>
        <name>[2Fe-2S] cluster</name>
        <dbReference type="ChEBI" id="CHEBI:190135"/>
    </ligand>
</feature>
<feature type="binding site" evidence="1">
    <location>
        <position position="87"/>
    </location>
    <ligand>
        <name>[2Fe-2S] cluster</name>
        <dbReference type="ChEBI" id="CHEBI:190135"/>
    </ligand>
</feature>
<feature type="binding site" evidence="1">
    <location>
        <position position="105"/>
    </location>
    <ligand>
        <name>[2Fe-2S] cluster</name>
        <dbReference type="ChEBI" id="CHEBI:190135"/>
    </ligand>
</feature>
<feature type="binding site" evidence="1">
    <location>
        <position position="108"/>
    </location>
    <ligand>
        <name>[2Fe-2S] cluster</name>
        <dbReference type="ChEBI" id="CHEBI:190135"/>
    </ligand>
</feature>
<feature type="binding site" evidence="1">
    <location>
        <position position="213"/>
    </location>
    <ligand>
        <name>Fe cation</name>
        <dbReference type="ChEBI" id="CHEBI:24875"/>
    </ligand>
</feature>
<feature type="binding site" evidence="1">
    <location>
        <position position="218"/>
    </location>
    <ligand>
        <name>Fe cation</name>
        <dbReference type="ChEBI" id="CHEBI:24875"/>
    </ligand>
</feature>
<evidence type="ECO:0000255" key="1">
    <source>
        <dbReference type="HAMAP-Rule" id="MF_01648"/>
    </source>
</evidence>
<protein>
    <recommendedName>
        <fullName evidence="1">3-phenylpropionate/cinnamic acid dioxygenase subunit alpha</fullName>
        <ecNumber evidence="1">1.14.12.19</ecNumber>
    </recommendedName>
</protein>
<gene>
    <name evidence="1" type="primary">hcaE</name>
    <name type="ordered locus">SFV_2586</name>
</gene>
<reference key="1">
    <citation type="journal article" date="2006" name="BMC Genomics">
        <title>Complete genome sequence of Shigella flexneri 5b and comparison with Shigella flexneri 2a.</title>
        <authorList>
            <person name="Nie H."/>
            <person name="Yang F."/>
            <person name="Zhang X."/>
            <person name="Yang J."/>
            <person name="Chen L."/>
            <person name="Wang J."/>
            <person name="Xiong Z."/>
            <person name="Peng J."/>
            <person name="Sun L."/>
            <person name="Dong J."/>
            <person name="Xue Y."/>
            <person name="Xu X."/>
            <person name="Chen S."/>
            <person name="Yao Z."/>
            <person name="Shen Y."/>
            <person name="Jin Q."/>
        </authorList>
    </citation>
    <scope>NUCLEOTIDE SEQUENCE [LARGE SCALE GENOMIC DNA]</scope>
    <source>
        <strain>8401</strain>
    </source>
</reference>